<sequence>MNKKKRYEILSILSRNNPEPKIELFFSSDFELLLSVILSAQSTDFIVNKTTKILFKIANTPETIFLLGLERLKNYIKDIGLYNTKALNIIRTSFIILTKYNSIVPNNRIELESLPGVGRKTANIILNILFKKKTIAVDTHVFRVCNRTNFAKGKNVKIVEEKLIKVVPSIFKLNFHSWFILHGRYICTARKIKCNICLIFKLCEFKQKIF</sequence>
<proteinExistence type="inferred from homology"/>
<dbReference type="EC" id="4.2.99.18" evidence="1"/>
<dbReference type="EMBL" id="BA000003">
    <property type="protein sequence ID" value="BAB12837.1"/>
    <property type="molecule type" value="Genomic_DNA"/>
</dbReference>
<dbReference type="RefSeq" id="NP_239951.1">
    <property type="nucleotide sequence ID" value="NC_002528.1"/>
</dbReference>
<dbReference type="RefSeq" id="WP_009874075.1">
    <property type="nucleotide sequence ID" value="NC_002528.1"/>
</dbReference>
<dbReference type="SMR" id="P57219"/>
<dbReference type="STRING" id="563178.BUAP5A_117"/>
<dbReference type="EnsemblBacteria" id="BAB12837">
    <property type="protein sequence ID" value="BAB12837"/>
    <property type="gene ID" value="BAB12837"/>
</dbReference>
<dbReference type="KEGG" id="buc:BU119"/>
<dbReference type="PATRIC" id="fig|107806.10.peg.128"/>
<dbReference type="eggNOG" id="COG0177">
    <property type="taxonomic scope" value="Bacteria"/>
</dbReference>
<dbReference type="HOGENOM" id="CLU_012862_3_0_6"/>
<dbReference type="Proteomes" id="UP000001806">
    <property type="component" value="Chromosome"/>
</dbReference>
<dbReference type="GO" id="GO:0051539">
    <property type="term" value="F:4 iron, 4 sulfur cluster binding"/>
    <property type="evidence" value="ECO:0007669"/>
    <property type="project" value="UniProtKB-UniRule"/>
</dbReference>
<dbReference type="GO" id="GO:0140078">
    <property type="term" value="F:class I DNA-(apurinic or apyrimidinic site) endonuclease activity"/>
    <property type="evidence" value="ECO:0007669"/>
    <property type="project" value="UniProtKB-EC"/>
</dbReference>
<dbReference type="GO" id="GO:0003677">
    <property type="term" value="F:DNA binding"/>
    <property type="evidence" value="ECO:0007669"/>
    <property type="project" value="UniProtKB-UniRule"/>
</dbReference>
<dbReference type="GO" id="GO:0019104">
    <property type="term" value="F:DNA N-glycosylase activity"/>
    <property type="evidence" value="ECO:0007669"/>
    <property type="project" value="UniProtKB-UniRule"/>
</dbReference>
<dbReference type="GO" id="GO:0046872">
    <property type="term" value="F:metal ion binding"/>
    <property type="evidence" value="ECO:0007669"/>
    <property type="project" value="UniProtKB-KW"/>
</dbReference>
<dbReference type="GO" id="GO:0006285">
    <property type="term" value="P:base-excision repair, AP site formation"/>
    <property type="evidence" value="ECO:0007669"/>
    <property type="project" value="TreeGrafter"/>
</dbReference>
<dbReference type="CDD" id="cd00056">
    <property type="entry name" value="ENDO3c"/>
    <property type="match status" value="1"/>
</dbReference>
<dbReference type="FunFam" id="1.10.1670.10:FF:000001">
    <property type="entry name" value="Endonuclease III"/>
    <property type="match status" value="1"/>
</dbReference>
<dbReference type="FunFam" id="1.10.340.30:FF:000001">
    <property type="entry name" value="Endonuclease III"/>
    <property type="match status" value="1"/>
</dbReference>
<dbReference type="Gene3D" id="1.10.1670.10">
    <property type="entry name" value="Helix-hairpin-Helix base-excision DNA repair enzymes (C-terminal)"/>
    <property type="match status" value="1"/>
</dbReference>
<dbReference type="Gene3D" id="1.10.340.30">
    <property type="entry name" value="Hypothetical protein, domain 2"/>
    <property type="match status" value="1"/>
</dbReference>
<dbReference type="HAMAP" id="MF_00942">
    <property type="entry name" value="Nth"/>
    <property type="match status" value="1"/>
</dbReference>
<dbReference type="InterPro" id="IPR011257">
    <property type="entry name" value="DNA_glycosylase"/>
</dbReference>
<dbReference type="InterPro" id="IPR004036">
    <property type="entry name" value="Endonuclease-III-like_CS2"/>
</dbReference>
<dbReference type="InterPro" id="IPR003265">
    <property type="entry name" value="HhH-GPD_domain"/>
</dbReference>
<dbReference type="InterPro" id="IPR023170">
    <property type="entry name" value="HhH_base_excis_C"/>
</dbReference>
<dbReference type="InterPro" id="IPR000445">
    <property type="entry name" value="HhH_motif"/>
</dbReference>
<dbReference type="InterPro" id="IPR005759">
    <property type="entry name" value="Nth"/>
</dbReference>
<dbReference type="NCBIfam" id="TIGR01083">
    <property type="entry name" value="nth"/>
    <property type="match status" value="1"/>
</dbReference>
<dbReference type="PANTHER" id="PTHR10359">
    <property type="entry name" value="A/G-SPECIFIC ADENINE GLYCOSYLASE/ENDONUCLEASE III"/>
    <property type="match status" value="1"/>
</dbReference>
<dbReference type="PANTHER" id="PTHR10359:SF18">
    <property type="entry name" value="ENDONUCLEASE III"/>
    <property type="match status" value="1"/>
</dbReference>
<dbReference type="Pfam" id="PF00633">
    <property type="entry name" value="HHH"/>
    <property type="match status" value="1"/>
</dbReference>
<dbReference type="Pfam" id="PF00730">
    <property type="entry name" value="HhH-GPD"/>
    <property type="match status" value="1"/>
</dbReference>
<dbReference type="PIRSF" id="PIRSF001435">
    <property type="entry name" value="Nth"/>
    <property type="match status" value="1"/>
</dbReference>
<dbReference type="SMART" id="SM00478">
    <property type="entry name" value="ENDO3c"/>
    <property type="match status" value="1"/>
</dbReference>
<dbReference type="SUPFAM" id="SSF48150">
    <property type="entry name" value="DNA-glycosylase"/>
    <property type="match status" value="1"/>
</dbReference>
<dbReference type="PROSITE" id="PS01155">
    <property type="entry name" value="ENDONUCLEASE_III_2"/>
    <property type="match status" value="1"/>
</dbReference>
<evidence type="ECO:0000255" key="1">
    <source>
        <dbReference type="HAMAP-Rule" id="MF_00942"/>
    </source>
</evidence>
<reference key="1">
    <citation type="journal article" date="2000" name="Nature">
        <title>Genome sequence of the endocellular bacterial symbiont of aphids Buchnera sp. APS.</title>
        <authorList>
            <person name="Shigenobu S."/>
            <person name="Watanabe H."/>
            <person name="Hattori M."/>
            <person name="Sakaki Y."/>
            <person name="Ishikawa H."/>
        </authorList>
    </citation>
    <scope>NUCLEOTIDE SEQUENCE [LARGE SCALE GENOMIC DNA]</scope>
    <source>
        <strain>APS</strain>
    </source>
</reference>
<protein>
    <recommendedName>
        <fullName evidence="1">Endonuclease III</fullName>
        <ecNumber evidence="1">4.2.99.18</ecNumber>
    </recommendedName>
    <alternativeName>
        <fullName evidence="1">DNA-(apurinic or apyrimidinic site) lyase</fullName>
    </alternativeName>
</protein>
<accession>P57219</accession>
<feature type="chain" id="PRO_0000102214" description="Endonuclease III">
    <location>
        <begin position="1"/>
        <end position="210"/>
    </location>
</feature>
<feature type="domain" description="HhH" evidence="1">
    <location>
        <begin position="108"/>
        <end position="127"/>
    </location>
</feature>
<feature type="binding site" evidence="1">
    <location>
        <position position="187"/>
    </location>
    <ligand>
        <name>[4Fe-4S] cluster</name>
        <dbReference type="ChEBI" id="CHEBI:49883"/>
    </ligand>
</feature>
<feature type="binding site" evidence="1">
    <location>
        <position position="194"/>
    </location>
    <ligand>
        <name>[4Fe-4S] cluster</name>
        <dbReference type="ChEBI" id="CHEBI:49883"/>
    </ligand>
</feature>
<feature type="binding site" evidence="1">
    <location>
        <position position="197"/>
    </location>
    <ligand>
        <name>[4Fe-4S] cluster</name>
        <dbReference type="ChEBI" id="CHEBI:49883"/>
    </ligand>
</feature>
<feature type="binding site" evidence="1">
    <location>
        <position position="203"/>
    </location>
    <ligand>
        <name>[4Fe-4S] cluster</name>
        <dbReference type="ChEBI" id="CHEBI:49883"/>
    </ligand>
</feature>
<gene>
    <name evidence="1" type="primary">nth</name>
    <name type="ordered locus">BU119</name>
</gene>
<organism>
    <name type="scientific">Buchnera aphidicola subsp. Acyrthosiphon pisum (strain APS)</name>
    <name type="common">Acyrthosiphon pisum symbiotic bacterium</name>
    <dbReference type="NCBI Taxonomy" id="107806"/>
    <lineage>
        <taxon>Bacteria</taxon>
        <taxon>Pseudomonadati</taxon>
        <taxon>Pseudomonadota</taxon>
        <taxon>Gammaproteobacteria</taxon>
        <taxon>Enterobacterales</taxon>
        <taxon>Erwiniaceae</taxon>
        <taxon>Buchnera</taxon>
    </lineage>
</organism>
<name>END3_BUCAI</name>
<keyword id="KW-0004">4Fe-4S</keyword>
<keyword id="KW-0227">DNA damage</keyword>
<keyword id="KW-0234">DNA repair</keyword>
<keyword id="KW-0238">DNA-binding</keyword>
<keyword id="KW-0326">Glycosidase</keyword>
<keyword id="KW-0378">Hydrolase</keyword>
<keyword id="KW-0408">Iron</keyword>
<keyword id="KW-0411">Iron-sulfur</keyword>
<keyword id="KW-0456">Lyase</keyword>
<keyword id="KW-0479">Metal-binding</keyword>
<keyword id="KW-1185">Reference proteome</keyword>
<comment type="function">
    <text evidence="1">DNA repair enzyme that has both DNA N-glycosylase activity and AP-lyase activity. The DNA N-glycosylase activity releases various damaged pyrimidines from DNA by cleaving the N-glycosidic bond, leaving an AP (apurinic/apyrimidinic) site. The AP-lyase activity cleaves the phosphodiester bond 3' to the AP site by a beta-elimination, leaving a 3'-terminal unsaturated sugar and a product with a terminal 5'-phosphate.</text>
</comment>
<comment type="catalytic activity">
    <reaction evidence="1">
        <text>2'-deoxyribonucleotide-(2'-deoxyribose 5'-phosphate)-2'-deoxyribonucleotide-DNA = a 3'-end 2'-deoxyribonucleotide-(2,3-dehydro-2,3-deoxyribose 5'-phosphate)-DNA + a 5'-end 5'-phospho-2'-deoxyribonucleoside-DNA + H(+)</text>
        <dbReference type="Rhea" id="RHEA:66592"/>
        <dbReference type="Rhea" id="RHEA-COMP:13180"/>
        <dbReference type="Rhea" id="RHEA-COMP:16897"/>
        <dbReference type="Rhea" id="RHEA-COMP:17067"/>
        <dbReference type="ChEBI" id="CHEBI:15378"/>
        <dbReference type="ChEBI" id="CHEBI:136412"/>
        <dbReference type="ChEBI" id="CHEBI:157695"/>
        <dbReference type="ChEBI" id="CHEBI:167181"/>
        <dbReference type="EC" id="4.2.99.18"/>
    </reaction>
</comment>
<comment type="cofactor">
    <cofactor evidence="1">
        <name>[4Fe-4S] cluster</name>
        <dbReference type="ChEBI" id="CHEBI:49883"/>
    </cofactor>
    <text evidence="1">Binds 1 [4Fe-4S] cluster.</text>
</comment>
<comment type="similarity">
    <text evidence="1">Belongs to the Nth/MutY family.</text>
</comment>